<organism>
    <name type="scientific">Daucus carota</name>
    <name type="common">Wild carrot</name>
    <dbReference type="NCBI Taxonomy" id="4039"/>
    <lineage>
        <taxon>Eukaryota</taxon>
        <taxon>Viridiplantae</taxon>
        <taxon>Streptophyta</taxon>
        <taxon>Embryophyta</taxon>
        <taxon>Tracheophyta</taxon>
        <taxon>Spermatophyta</taxon>
        <taxon>Magnoliopsida</taxon>
        <taxon>eudicotyledons</taxon>
        <taxon>Gunneridae</taxon>
        <taxon>Pentapetalae</taxon>
        <taxon>asterids</taxon>
        <taxon>campanulids</taxon>
        <taxon>Apiales</taxon>
        <taxon>Apiaceae</taxon>
        <taxon>Apioideae</taxon>
        <taxon>Scandiceae</taxon>
        <taxon>Daucinae</taxon>
        <taxon>Daucus</taxon>
        <taxon>Daucus sect. Daucus</taxon>
    </lineage>
</organism>
<gene>
    <name evidence="1" type="primary">ndhE</name>
</gene>
<dbReference type="EC" id="7.1.1.-" evidence="1"/>
<dbReference type="EMBL" id="DQ898156">
    <property type="protein sequence ID" value="ABI32476.1"/>
    <property type="molecule type" value="Genomic_DNA"/>
</dbReference>
<dbReference type="RefSeq" id="YP_740169.1">
    <property type="nucleotide sequence ID" value="NC_008325.1"/>
</dbReference>
<dbReference type="SMR" id="Q0G9R0"/>
<dbReference type="GeneID" id="4266812"/>
<dbReference type="OMA" id="FDVWLSR"/>
<dbReference type="GO" id="GO:0009535">
    <property type="term" value="C:chloroplast thylakoid membrane"/>
    <property type="evidence" value="ECO:0007669"/>
    <property type="project" value="UniProtKB-SubCell"/>
</dbReference>
<dbReference type="GO" id="GO:0030964">
    <property type="term" value="C:NADH dehydrogenase complex"/>
    <property type="evidence" value="ECO:0007669"/>
    <property type="project" value="TreeGrafter"/>
</dbReference>
<dbReference type="GO" id="GO:0016655">
    <property type="term" value="F:oxidoreductase activity, acting on NAD(P)H, quinone or similar compound as acceptor"/>
    <property type="evidence" value="ECO:0007669"/>
    <property type="project" value="UniProtKB-UniRule"/>
</dbReference>
<dbReference type="GO" id="GO:0048038">
    <property type="term" value="F:quinone binding"/>
    <property type="evidence" value="ECO:0007669"/>
    <property type="project" value="UniProtKB-KW"/>
</dbReference>
<dbReference type="GO" id="GO:0042773">
    <property type="term" value="P:ATP synthesis coupled electron transport"/>
    <property type="evidence" value="ECO:0007669"/>
    <property type="project" value="InterPro"/>
</dbReference>
<dbReference type="GO" id="GO:0019684">
    <property type="term" value="P:photosynthesis, light reaction"/>
    <property type="evidence" value="ECO:0007669"/>
    <property type="project" value="UniProtKB-UniRule"/>
</dbReference>
<dbReference type="FunFam" id="1.10.287.3510:FF:000001">
    <property type="entry name" value="NADH-quinone oxidoreductase subunit K"/>
    <property type="match status" value="1"/>
</dbReference>
<dbReference type="Gene3D" id="1.10.287.3510">
    <property type="match status" value="1"/>
</dbReference>
<dbReference type="HAMAP" id="MF_01456">
    <property type="entry name" value="NDH1_NuoK"/>
    <property type="match status" value="1"/>
</dbReference>
<dbReference type="InterPro" id="IPR001133">
    <property type="entry name" value="NADH_UbQ_OxRdtase_chain4L/K"/>
</dbReference>
<dbReference type="InterPro" id="IPR039428">
    <property type="entry name" value="NUOK/Mnh_C1-like"/>
</dbReference>
<dbReference type="NCBIfam" id="NF004320">
    <property type="entry name" value="PRK05715.1-2"/>
    <property type="match status" value="1"/>
</dbReference>
<dbReference type="NCBIfam" id="NF004322">
    <property type="entry name" value="PRK05715.1-4"/>
    <property type="match status" value="1"/>
</dbReference>
<dbReference type="NCBIfam" id="NF004323">
    <property type="entry name" value="PRK05715.1-5"/>
    <property type="match status" value="1"/>
</dbReference>
<dbReference type="PANTHER" id="PTHR11434:SF16">
    <property type="entry name" value="NADH-UBIQUINONE OXIDOREDUCTASE CHAIN 4L"/>
    <property type="match status" value="1"/>
</dbReference>
<dbReference type="PANTHER" id="PTHR11434">
    <property type="entry name" value="NADH-UBIQUINONE OXIDOREDUCTASE SUBUNIT ND4L"/>
    <property type="match status" value="1"/>
</dbReference>
<dbReference type="Pfam" id="PF00420">
    <property type="entry name" value="Oxidored_q2"/>
    <property type="match status" value="1"/>
</dbReference>
<evidence type="ECO:0000255" key="1">
    <source>
        <dbReference type="HAMAP-Rule" id="MF_01456"/>
    </source>
</evidence>
<feature type="chain" id="PRO_0000360324" description="NAD(P)H-quinone oxidoreductase subunit 4L, chloroplastic">
    <location>
        <begin position="1"/>
        <end position="101"/>
    </location>
</feature>
<feature type="transmembrane region" description="Helical" evidence="1">
    <location>
        <begin position="2"/>
        <end position="22"/>
    </location>
</feature>
<feature type="transmembrane region" description="Helical" evidence="1">
    <location>
        <begin position="32"/>
        <end position="52"/>
    </location>
</feature>
<feature type="transmembrane region" description="Helical" evidence="1">
    <location>
        <begin position="61"/>
        <end position="81"/>
    </location>
</feature>
<sequence>MMLEHVLVLSAYLFSVGLYGLITSRNMVRALMCLELILNAVNINFVTFSDFFDSRQLKGSIFSIFVIAIAAAEAAIGLAIVSSIYRNRKSTRINQSNLLNK</sequence>
<keyword id="KW-0150">Chloroplast</keyword>
<keyword id="KW-0472">Membrane</keyword>
<keyword id="KW-0520">NAD</keyword>
<keyword id="KW-0521">NADP</keyword>
<keyword id="KW-0934">Plastid</keyword>
<keyword id="KW-0618">Plastoquinone</keyword>
<keyword id="KW-0874">Quinone</keyword>
<keyword id="KW-0793">Thylakoid</keyword>
<keyword id="KW-1278">Translocase</keyword>
<keyword id="KW-0812">Transmembrane</keyword>
<keyword id="KW-1133">Transmembrane helix</keyword>
<keyword id="KW-0813">Transport</keyword>
<accession>Q0G9R0</accession>
<comment type="function">
    <text evidence="1">NDH shuttles electrons from NAD(P)H:plastoquinone, via FMN and iron-sulfur (Fe-S) centers, to quinones in the photosynthetic chain and possibly in a chloroplast respiratory chain. The immediate electron acceptor for the enzyme in this species is believed to be plastoquinone. Couples the redox reaction to proton translocation, and thus conserves the redox energy in a proton gradient.</text>
</comment>
<comment type="catalytic activity">
    <reaction evidence="1">
        <text>a plastoquinone + NADH + (n+1) H(+)(in) = a plastoquinol + NAD(+) + n H(+)(out)</text>
        <dbReference type="Rhea" id="RHEA:42608"/>
        <dbReference type="Rhea" id="RHEA-COMP:9561"/>
        <dbReference type="Rhea" id="RHEA-COMP:9562"/>
        <dbReference type="ChEBI" id="CHEBI:15378"/>
        <dbReference type="ChEBI" id="CHEBI:17757"/>
        <dbReference type="ChEBI" id="CHEBI:57540"/>
        <dbReference type="ChEBI" id="CHEBI:57945"/>
        <dbReference type="ChEBI" id="CHEBI:62192"/>
    </reaction>
</comment>
<comment type="catalytic activity">
    <reaction evidence="1">
        <text>a plastoquinone + NADPH + (n+1) H(+)(in) = a plastoquinol + NADP(+) + n H(+)(out)</text>
        <dbReference type="Rhea" id="RHEA:42612"/>
        <dbReference type="Rhea" id="RHEA-COMP:9561"/>
        <dbReference type="Rhea" id="RHEA-COMP:9562"/>
        <dbReference type="ChEBI" id="CHEBI:15378"/>
        <dbReference type="ChEBI" id="CHEBI:17757"/>
        <dbReference type="ChEBI" id="CHEBI:57783"/>
        <dbReference type="ChEBI" id="CHEBI:58349"/>
        <dbReference type="ChEBI" id="CHEBI:62192"/>
    </reaction>
</comment>
<comment type="subunit">
    <text evidence="1">NDH is composed of at least 16 different subunits, 5 of which are encoded in the nucleus.</text>
</comment>
<comment type="subcellular location">
    <subcellularLocation>
        <location evidence="1">Plastid</location>
        <location evidence="1">Chloroplast thylakoid membrane</location>
        <topology evidence="1">Multi-pass membrane protein</topology>
    </subcellularLocation>
</comment>
<comment type="similarity">
    <text evidence="1">Belongs to the complex I subunit 4L family.</text>
</comment>
<proteinExistence type="inferred from homology"/>
<reference key="1">
    <citation type="journal article" date="2006" name="BMC Genomics">
        <title>Complete plastid genome sequence of Daucus carota: implications for biotechnology and phylogeny of angiosperms.</title>
        <authorList>
            <person name="Ruhlman T."/>
            <person name="Lee S.-B."/>
            <person name="Jansen R.K."/>
            <person name="Hostetler J.B."/>
            <person name="Tallon L.J."/>
            <person name="Town C.D."/>
            <person name="Daniell H."/>
        </authorList>
    </citation>
    <scope>NUCLEOTIDE SEQUENCE [LARGE SCALE GENOMIC DNA]</scope>
    <source>
        <strain>cv. Danvers Half-long</strain>
    </source>
</reference>
<name>NU4LC_DAUCA</name>
<protein>
    <recommendedName>
        <fullName evidence="1">NAD(P)H-quinone oxidoreductase subunit 4L, chloroplastic</fullName>
        <ecNumber evidence="1">7.1.1.-</ecNumber>
    </recommendedName>
    <alternativeName>
        <fullName evidence="1">NAD(P)H dehydrogenase subunit 4L</fullName>
    </alternativeName>
    <alternativeName>
        <fullName evidence="1">NADH-plastoquinone oxidoreductase subunit 4L</fullName>
    </alternativeName>
</protein>
<geneLocation type="chloroplast"/>